<organism>
    <name type="scientific">Rattus norvegicus</name>
    <name type="common">Rat</name>
    <dbReference type="NCBI Taxonomy" id="10116"/>
    <lineage>
        <taxon>Eukaryota</taxon>
        <taxon>Metazoa</taxon>
        <taxon>Chordata</taxon>
        <taxon>Craniata</taxon>
        <taxon>Vertebrata</taxon>
        <taxon>Euteleostomi</taxon>
        <taxon>Mammalia</taxon>
        <taxon>Eutheria</taxon>
        <taxon>Euarchontoglires</taxon>
        <taxon>Glires</taxon>
        <taxon>Rodentia</taxon>
        <taxon>Myomorpha</taxon>
        <taxon>Muroidea</taxon>
        <taxon>Muridae</taxon>
        <taxon>Murinae</taxon>
        <taxon>Rattus</taxon>
    </lineage>
</organism>
<feature type="chain" id="PRO_0000049025" description="Homeobox protein DLX-2">
    <location>
        <begin position="1" status="less than"/>
        <end position="83" status="greater than"/>
    </location>
</feature>
<feature type="region of interest" description="Disordered" evidence="2">
    <location>
        <begin position="1"/>
        <end position="27"/>
    </location>
</feature>
<feature type="region of interest" description="Disordered" evidence="2">
    <location>
        <begin position="63"/>
        <end position="83"/>
    </location>
</feature>
<feature type="compositionally biased region" description="Polar residues" evidence="2">
    <location>
        <begin position="1"/>
        <end position="14"/>
    </location>
</feature>
<feature type="non-terminal residue">
    <location>
        <position position="1"/>
    </location>
</feature>
<feature type="non-terminal residue">
    <location>
        <position position="83"/>
    </location>
</feature>
<comment type="function">
    <text evidence="1">Acts as a transcriptional activator (By similarity). Activates transcription of CGA/alpha-GSU, via binding to the downstream activin regulatory element (DARE) in the gene promoter (By similarity). Plays a role in terminal differentiation of interneurons, such as amacrine and bipolar cells in the developing retina (By similarity). Likely to play a regulatory role in the development of the ventral forebrain. May play a role in craniofacial patterning and morphogenesis (By similarity).</text>
</comment>
<comment type="subunit">
    <text evidence="1">Interacts (via homeobox DNA-binding domain) with POU4F2; this interaction enhances retinal ganglion cell (RGC) differentiation.</text>
</comment>
<comment type="subcellular location">
    <subcellularLocation>
        <location evidence="3">Nucleus</location>
    </subcellularLocation>
</comment>
<comment type="similarity">
    <text evidence="3">Belongs to the distal-less homeobox family.</text>
</comment>
<name>DLX2_RAT</name>
<keyword id="KW-0010">Activator</keyword>
<keyword id="KW-0217">Developmental protein</keyword>
<keyword id="KW-0221">Differentiation</keyword>
<keyword id="KW-0238">DNA-binding</keyword>
<keyword id="KW-0371">Homeobox</keyword>
<keyword id="KW-0539">Nucleus</keyword>
<keyword id="KW-1185">Reference proteome</keyword>
<keyword id="KW-0804">Transcription</keyword>
<keyword id="KW-0805">Transcription regulation</keyword>
<reference key="1">
    <citation type="journal article" date="1995" name="J. Neurosci.">
        <title>Fibroblast growth factor 2 increases Otx2 expression in precursor cells from mammalian telencephalon.</title>
        <authorList>
            <person name="Robel L."/>
            <person name="Ding M."/>
            <person name="James A.J."/>
            <person name="Lin X."/>
            <person name="Simeone A."/>
            <person name="Leckman J.F."/>
            <person name="Vaccarino F.M."/>
        </authorList>
    </citation>
    <scope>NUCLEOTIDE SEQUENCE [MRNA]</scope>
</reference>
<protein>
    <recommendedName>
        <fullName>Homeobox protein DLX-2</fullName>
    </recommendedName>
    <alternativeName>
        <fullName>DLX-5</fullName>
    </alternativeName>
</protein>
<evidence type="ECO:0000250" key="1">
    <source>
        <dbReference type="UniProtKB" id="P40764"/>
    </source>
</evidence>
<evidence type="ECO:0000256" key="2">
    <source>
        <dbReference type="SAM" id="MobiDB-lite"/>
    </source>
</evidence>
<evidence type="ECO:0000305" key="3"/>
<sequence>STATDSSYYTNQQHPAGGGGGGASPYAHMGSYQYHASGLNNVSYSAKSSYDLGYTAAYTSYAPYGTSSSPVNNEPDKEDLEPE</sequence>
<accession>Q64204</accession>
<gene>
    <name type="primary">Dlx2</name>
</gene>
<proteinExistence type="evidence at transcript level"/>
<dbReference type="EMBL" id="S81930">
    <property type="protein sequence ID" value="AAP32274.1"/>
    <property type="molecule type" value="mRNA"/>
</dbReference>
<dbReference type="STRING" id="10116.ENSRNOP00000002076"/>
<dbReference type="PhosphoSitePlus" id="Q64204"/>
<dbReference type="PaxDb" id="10116-ENSRNOP00000002076"/>
<dbReference type="UCSC" id="RGD:1304853">
    <property type="organism name" value="rat"/>
</dbReference>
<dbReference type="AGR" id="RGD:1304853"/>
<dbReference type="RGD" id="1304853">
    <property type="gene designation" value="Dlx2"/>
</dbReference>
<dbReference type="eggNOG" id="KOG0850">
    <property type="taxonomic scope" value="Eukaryota"/>
</dbReference>
<dbReference type="InParanoid" id="Q64204"/>
<dbReference type="Proteomes" id="UP000002494">
    <property type="component" value="Unplaced"/>
</dbReference>
<dbReference type="GO" id="GO:0005634">
    <property type="term" value="C:nucleus"/>
    <property type="evidence" value="ECO:0000266"/>
    <property type="project" value="RGD"/>
</dbReference>
<dbReference type="GO" id="GO:0003682">
    <property type="term" value="F:chromatin binding"/>
    <property type="evidence" value="ECO:0000266"/>
    <property type="project" value="RGD"/>
</dbReference>
<dbReference type="GO" id="GO:0003677">
    <property type="term" value="F:DNA binding"/>
    <property type="evidence" value="ECO:0000266"/>
    <property type="project" value="RGD"/>
</dbReference>
<dbReference type="GO" id="GO:0001228">
    <property type="term" value="F:DNA-binding transcription activator activity, RNA polymerase II-specific"/>
    <property type="evidence" value="ECO:0000266"/>
    <property type="project" value="RGD"/>
</dbReference>
<dbReference type="GO" id="GO:0000977">
    <property type="term" value="F:RNA polymerase II transcription regulatory region sequence-specific DNA binding"/>
    <property type="evidence" value="ECO:0000266"/>
    <property type="project" value="RGD"/>
</dbReference>
<dbReference type="GO" id="GO:1990837">
    <property type="term" value="F:sequence-specific double-stranded DNA binding"/>
    <property type="evidence" value="ECO:0000266"/>
    <property type="project" value="RGD"/>
</dbReference>
<dbReference type="GO" id="GO:0003727">
    <property type="term" value="F:single-stranded RNA binding"/>
    <property type="evidence" value="ECO:0000266"/>
    <property type="project" value="RGD"/>
</dbReference>
<dbReference type="GO" id="GO:0000976">
    <property type="term" value="F:transcription cis-regulatory region binding"/>
    <property type="evidence" value="ECO:0000250"/>
    <property type="project" value="UniProtKB"/>
</dbReference>
<dbReference type="GO" id="GO:0048755">
    <property type="term" value="P:branching morphogenesis of a nerve"/>
    <property type="evidence" value="ECO:0000266"/>
    <property type="project" value="RGD"/>
</dbReference>
<dbReference type="GO" id="GO:0051216">
    <property type="term" value="P:cartilage development"/>
    <property type="evidence" value="ECO:0000266"/>
    <property type="project" value="RGD"/>
</dbReference>
<dbReference type="GO" id="GO:0021892">
    <property type="term" value="P:cerebral cortex GABAergic interneuron differentiation"/>
    <property type="evidence" value="ECO:0000266"/>
    <property type="project" value="RGD"/>
</dbReference>
<dbReference type="GO" id="GO:0021893">
    <property type="term" value="P:cerebral cortex GABAergic interneuron fate commitment"/>
    <property type="evidence" value="ECO:0000266"/>
    <property type="project" value="RGD"/>
</dbReference>
<dbReference type="GO" id="GO:0048701">
    <property type="term" value="P:embryonic cranial skeleton morphogenesis"/>
    <property type="evidence" value="ECO:0000266"/>
    <property type="project" value="RGD"/>
</dbReference>
<dbReference type="GO" id="GO:0048706">
    <property type="term" value="P:embryonic skeletal system development"/>
    <property type="evidence" value="ECO:0000266"/>
    <property type="project" value="RGD"/>
</dbReference>
<dbReference type="GO" id="GO:0021879">
    <property type="term" value="P:forebrain neuron differentiation"/>
    <property type="evidence" value="ECO:0000266"/>
    <property type="project" value="RGD"/>
</dbReference>
<dbReference type="GO" id="GO:0097154">
    <property type="term" value="P:GABAergic neuron differentiation"/>
    <property type="evidence" value="ECO:0000266"/>
    <property type="project" value="RGD"/>
</dbReference>
<dbReference type="GO" id="GO:0021766">
    <property type="term" value="P:hippocampus development"/>
    <property type="evidence" value="ECO:0000266"/>
    <property type="project" value="RGD"/>
</dbReference>
<dbReference type="GO" id="GO:0045746">
    <property type="term" value="P:negative regulation of Notch signaling pathway"/>
    <property type="evidence" value="ECO:0000266"/>
    <property type="project" value="RGD"/>
</dbReference>
<dbReference type="GO" id="GO:0048715">
    <property type="term" value="P:negative regulation of oligodendrocyte differentiation"/>
    <property type="evidence" value="ECO:0000266"/>
    <property type="project" value="RGD"/>
</dbReference>
<dbReference type="GO" id="GO:0046533">
    <property type="term" value="P:negative regulation of photoreceptor cell differentiation"/>
    <property type="evidence" value="ECO:0000250"/>
    <property type="project" value="UniProtKB"/>
</dbReference>
<dbReference type="GO" id="GO:0000122">
    <property type="term" value="P:negative regulation of transcription by RNA polymerase II"/>
    <property type="evidence" value="ECO:0000266"/>
    <property type="project" value="RGD"/>
</dbReference>
<dbReference type="GO" id="GO:0014016">
    <property type="term" value="P:neuroblast differentiation"/>
    <property type="evidence" value="ECO:0000266"/>
    <property type="project" value="RGD"/>
</dbReference>
<dbReference type="GO" id="GO:0007219">
    <property type="term" value="P:Notch signaling pathway"/>
    <property type="evidence" value="ECO:0000266"/>
    <property type="project" value="RGD"/>
</dbReference>
<dbReference type="GO" id="GO:0042475">
    <property type="term" value="P:odontogenesis of dentin-containing tooth"/>
    <property type="evidence" value="ECO:0000266"/>
    <property type="project" value="RGD"/>
</dbReference>
<dbReference type="GO" id="GO:0021772">
    <property type="term" value="P:olfactory bulb development"/>
    <property type="evidence" value="ECO:0000266"/>
    <property type="project" value="RGD"/>
</dbReference>
<dbReference type="GO" id="GO:0048709">
    <property type="term" value="P:oligodendrocyte differentiation"/>
    <property type="evidence" value="ECO:0000266"/>
    <property type="project" value="RGD"/>
</dbReference>
<dbReference type="GO" id="GO:1902871">
    <property type="term" value="P:positive regulation of amacrine cell differentiation"/>
    <property type="evidence" value="ECO:0000250"/>
    <property type="project" value="UniProtKB"/>
</dbReference>
<dbReference type="GO" id="GO:0045597">
    <property type="term" value="P:positive regulation of cell differentiation"/>
    <property type="evidence" value="ECO:0000250"/>
    <property type="project" value="UniProtKB"/>
</dbReference>
<dbReference type="GO" id="GO:0045944">
    <property type="term" value="P:positive regulation of transcription by RNA polymerase II"/>
    <property type="evidence" value="ECO:0000250"/>
    <property type="project" value="UniProtKB"/>
</dbReference>
<dbReference type="GO" id="GO:0009954">
    <property type="term" value="P:proximal/distal pattern formation"/>
    <property type="evidence" value="ECO:0000266"/>
    <property type="project" value="RGD"/>
</dbReference>
<dbReference type="GO" id="GO:0006357">
    <property type="term" value="P:regulation of transcription by RNA polymerase II"/>
    <property type="evidence" value="ECO:0000266"/>
    <property type="project" value="RGD"/>
</dbReference>
<dbReference type="GO" id="GO:0032868">
    <property type="term" value="P:response to insulin"/>
    <property type="evidence" value="ECO:0000270"/>
    <property type="project" value="RGD"/>
</dbReference>
<dbReference type="GO" id="GO:0021544">
    <property type="term" value="P:subpallium development"/>
    <property type="evidence" value="ECO:0000266"/>
    <property type="project" value="RGD"/>
</dbReference>
<dbReference type="InterPro" id="IPR022135">
    <property type="entry name" value="Distal-less_N"/>
</dbReference>
<dbReference type="Pfam" id="PF12413">
    <property type="entry name" value="DLL_N"/>
    <property type="match status" value="1"/>
</dbReference>